<proteinExistence type="evidence at transcript level"/>
<keyword id="KW-1003">Cell membrane</keyword>
<keyword id="KW-0325">Glycoprotein</keyword>
<keyword id="KW-0378">Hydrolase</keyword>
<keyword id="KW-0472">Membrane</keyword>
<keyword id="KW-0479">Metal-binding</keyword>
<keyword id="KW-0482">Metalloprotease</keyword>
<keyword id="KW-0645">Protease</keyword>
<keyword id="KW-1185">Reference proteome</keyword>
<keyword id="KW-0732">Signal</keyword>
<keyword id="KW-0812">Transmembrane</keyword>
<keyword id="KW-1133">Transmembrane helix</keyword>
<keyword id="KW-0879">Wnt signaling pathway</keyword>
<reference key="1">
    <citation type="journal article" date="2012" name="Cell">
        <title>Tiki1 is required for head formation via Wnt cleavage-oxidation and inactivation.</title>
        <authorList>
            <person name="Zhang X."/>
            <person name="Abreu J.G."/>
            <person name="Yokota C."/>
            <person name="Macdonald B.T."/>
            <person name="Singh S."/>
            <person name="Coburn K.L."/>
            <person name="Cheong S.M."/>
            <person name="Zhang M.M."/>
            <person name="Ye Q.Z."/>
            <person name="Hang H.C."/>
            <person name="Steen H."/>
            <person name="He X."/>
        </authorList>
    </citation>
    <scope>NUCLEOTIDE SEQUENCE [MRNA]</scope>
</reference>
<reference key="2">
    <citation type="journal article" date="2013" name="Nature">
        <title>The zebrafish reference genome sequence and its relationship to the human genome.</title>
        <authorList>
            <person name="Howe K."/>
            <person name="Clark M.D."/>
            <person name="Torroja C.F."/>
            <person name="Torrance J."/>
            <person name="Berthelot C."/>
            <person name="Muffato M."/>
            <person name="Collins J.E."/>
            <person name="Humphray S."/>
            <person name="McLaren K."/>
            <person name="Matthews L."/>
            <person name="McLaren S."/>
            <person name="Sealy I."/>
            <person name="Caccamo M."/>
            <person name="Churcher C."/>
            <person name="Scott C."/>
            <person name="Barrett J.C."/>
            <person name="Koch R."/>
            <person name="Rauch G.J."/>
            <person name="White S."/>
            <person name="Chow W."/>
            <person name="Kilian B."/>
            <person name="Quintais L.T."/>
            <person name="Guerra-Assuncao J.A."/>
            <person name="Zhou Y."/>
            <person name="Gu Y."/>
            <person name="Yen J."/>
            <person name="Vogel J.H."/>
            <person name="Eyre T."/>
            <person name="Redmond S."/>
            <person name="Banerjee R."/>
            <person name="Chi J."/>
            <person name="Fu B."/>
            <person name="Langley E."/>
            <person name="Maguire S.F."/>
            <person name="Laird G.K."/>
            <person name="Lloyd D."/>
            <person name="Kenyon E."/>
            <person name="Donaldson S."/>
            <person name="Sehra H."/>
            <person name="Almeida-King J."/>
            <person name="Loveland J."/>
            <person name="Trevanion S."/>
            <person name="Jones M."/>
            <person name="Quail M."/>
            <person name="Willey D."/>
            <person name="Hunt A."/>
            <person name="Burton J."/>
            <person name="Sims S."/>
            <person name="McLay K."/>
            <person name="Plumb B."/>
            <person name="Davis J."/>
            <person name="Clee C."/>
            <person name="Oliver K."/>
            <person name="Clark R."/>
            <person name="Riddle C."/>
            <person name="Elliot D."/>
            <person name="Threadgold G."/>
            <person name="Harden G."/>
            <person name="Ware D."/>
            <person name="Begum S."/>
            <person name="Mortimore B."/>
            <person name="Kerry G."/>
            <person name="Heath P."/>
            <person name="Phillimore B."/>
            <person name="Tracey A."/>
            <person name="Corby N."/>
            <person name="Dunn M."/>
            <person name="Johnson C."/>
            <person name="Wood J."/>
            <person name="Clark S."/>
            <person name="Pelan S."/>
            <person name="Griffiths G."/>
            <person name="Smith M."/>
            <person name="Glithero R."/>
            <person name="Howden P."/>
            <person name="Barker N."/>
            <person name="Lloyd C."/>
            <person name="Stevens C."/>
            <person name="Harley J."/>
            <person name="Holt K."/>
            <person name="Panagiotidis G."/>
            <person name="Lovell J."/>
            <person name="Beasley H."/>
            <person name="Henderson C."/>
            <person name="Gordon D."/>
            <person name="Auger K."/>
            <person name="Wright D."/>
            <person name="Collins J."/>
            <person name="Raisen C."/>
            <person name="Dyer L."/>
            <person name="Leung K."/>
            <person name="Robertson L."/>
            <person name="Ambridge K."/>
            <person name="Leongamornlert D."/>
            <person name="McGuire S."/>
            <person name="Gilderthorp R."/>
            <person name="Griffiths C."/>
            <person name="Manthravadi D."/>
            <person name="Nichol S."/>
            <person name="Barker G."/>
            <person name="Whitehead S."/>
            <person name="Kay M."/>
            <person name="Brown J."/>
            <person name="Murnane C."/>
            <person name="Gray E."/>
            <person name="Humphries M."/>
            <person name="Sycamore N."/>
            <person name="Barker D."/>
            <person name="Saunders D."/>
            <person name="Wallis J."/>
            <person name="Babbage A."/>
            <person name="Hammond S."/>
            <person name="Mashreghi-Mohammadi M."/>
            <person name="Barr L."/>
            <person name="Martin S."/>
            <person name="Wray P."/>
            <person name="Ellington A."/>
            <person name="Matthews N."/>
            <person name="Ellwood M."/>
            <person name="Woodmansey R."/>
            <person name="Clark G."/>
            <person name="Cooper J."/>
            <person name="Tromans A."/>
            <person name="Grafham D."/>
            <person name="Skuce C."/>
            <person name="Pandian R."/>
            <person name="Andrews R."/>
            <person name="Harrison E."/>
            <person name="Kimberley A."/>
            <person name="Garnett J."/>
            <person name="Fosker N."/>
            <person name="Hall R."/>
            <person name="Garner P."/>
            <person name="Kelly D."/>
            <person name="Bird C."/>
            <person name="Palmer S."/>
            <person name="Gehring I."/>
            <person name="Berger A."/>
            <person name="Dooley C.M."/>
            <person name="Ersan-Urun Z."/>
            <person name="Eser C."/>
            <person name="Geiger H."/>
            <person name="Geisler M."/>
            <person name="Karotki L."/>
            <person name="Kirn A."/>
            <person name="Konantz J."/>
            <person name="Konantz M."/>
            <person name="Oberlander M."/>
            <person name="Rudolph-Geiger S."/>
            <person name="Teucke M."/>
            <person name="Lanz C."/>
            <person name="Raddatz G."/>
            <person name="Osoegawa K."/>
            <person name="Zhu B."/>
            <person name="Rapp A."/>
            <person name="Widaa S."/>
            <person name="Langford C."/>
            <person name="Yang F."/>
            <person name="Schuster S.C."/>
            <person name="Carter N.P."/>
            <person name="Harrow J."/>
            <person name="Ning Z."/>
            <person name="Herrero J."/>
            <person name="Searle S.M."/>
            <person name="Enright A."/>
            <person name="Geisler R."/>
            <person name="Plasterk R.H."/>
            <person name="Lee C."/>
            <person name="Westerfield M."/>
            <person name="de Jong P.J."/>
            <person name="Zon L.I."/>
            <person name="Postlethwait J.H."/>
            <person name="Nusslein-Volhard C."/>
            <person name="Hubbard T.J."/>
            <person name="Roest Crollius H."/>
            <person name="Rogers J."/>
            <person name="Stemple D.L."/>
        </authorList>
    </citation>
    <scope>NUCLEOTIDE SEQUENCE [LARGE SCALE GENOMIC DNA]</scope>
    <source>
        <strain>Tuebingen</strain>
    </source>
</reference>
<sequence length="518" mass="59742">MNCQSGLRWLVTLCAFFQVGSARDTHESTRQCDKPVSQKDMNSFLWTVKRPRPFPPSYLFGTIHVPYTRVWDYIPESSKRAFQTSNSVFFELDLTDPLTISKLTSCQLLPNGENLQTLLPRDLYRRLKRHLDYVKHMMPFWMTADQRGRGLYADYLFNAIAGNWERKRPVWVMLMVNSLTEADVRSRGTPVLDLFLAQEAERLGKQTGAVERVEEQCHPLNGLNFSQVLFALNQTLLQHESLRAGILQGTFTTEDLIAHYNCGDLNSIIFNHDTSQLPHFINSSLPDHERLTAQQIDSYLRQELIYKRNERMARRVSALLQRNPNQSFFFAFGAGHFLGNHSVLDILRQEGYEVEHTPPQEPIIQSWSEREATTLNPTEDSFESVTEWTSETPELEEISQEELSHMLLPDSLSQLEEFGRYKHPRKTHHTHSRPRLFSDLWVRIGDSTTPHPSIRITNGYVTVEPPQIRQEQQQRLRERLKPLSEPTNPSALDSAAPNPTYALTCFLACLISQLLFAS</sequence>
<evidence type="ECO:0000250" key="1"/>
<evidence type="ECO:0000255" key="2"/>
<evidence type="ECO:0000305" key="3"/>
<gene>
    <name type="primary">trabd2b</name>
    <name type="synonym">tiki2</name>
    <name type="ORF">si:ch211-120j21.1</name>
</gene>
<name>TIKI2_DANRE</name>
<organism>
    <name type="scientific">Danio rerio</name>
    <name type="common">Zebrafish</name>
    <name type="synonym">Brachydanio rerio</name>
    <dbReference type="NCBI Taxonomy" id="7955"/>
    <lineage>
        <taxon>Eukaryota</taxon>
        <taxon>Metazoa</taxon>
        <taxon>Chordata</taxon>
        <taxon>Craniata</taxon>
        <taxon>Vertebrata</taxon>
        <taxon>Euteleostomi</taxon>
        <taxon>Actinopterygii</taxon>
        <taxon>Neopterygii</taxon>
        <taxon>Teleostei</taxon>
        <taxon>Ostariophysi</taxon>
        <taxon>Cypriniformes</taxon>
        <taxon>Danionidae</taxon>
        <taxon>Danioninae</taxon>
        <taxon>Danio</taxon>
    </lineage>
</organism>
<dbReference type="EC" id="3.4.-.-"/>
<dbReference type="EMBL" id="JQ653420">
    <property type="protein sequence ID" value="AFN02886.1"/>
    <property type="molecule type" value="mRNA"/>
</dbReference>
<dbReference type="EMBL" id="CR352292">
    <property type="status" value="NOT_ANNOTATED_CDS"/>
    <property type="molecule type" value="Genomic_DNA"/>
</dbReference>
<dbReference type="RefSeq" id="NP_001257406.1">
    <property type="nucleotide sequence ID" value="NM_001270477.1"/>
</dbReference>
<dbReference type="FunCoup" id="E7F4V6">
    <property type="interactions" value="31"/>
</dbReference>
<dbReference type="STRING" id="7955.ENSDARP00000107884"/>
<dbReference type="GlyCosmos" id="E7F4V6">
    <property type="glycosylation" value="5 sites, No reported glycans"/>
</dbReference>
<dbReference type="PaxDb" id="7955-ENSDARP00000107884"/>
<dbReference type="Ensembl" id="ENSDART00000129193">
    <property type="protein sequence ID" value="ENSDARP00000107884"/>
    <property type="gene ID" value="ENSDARG00000088816"/>
</dbReference>
<dbReference type="GeneID" id="566028"/>
<dbReference type="KEGG" id="dre:566028"/>
<dbReference type="AGR" id="ZFIN:ZDB-GENE-091204-381"/>
<dbReference type="CTD" id="388630"/>
<dbReference type="ZFIN" id="ZDB-GENE-091204-381">
    <property type="gene designation" value="trabd2b"/>
</dbReference>
<dbReference type="eggNOG" id="ENOG502QPR1">
    <property type="taxonomic scope" value="Eukaryota"/>
</dbReference>
<dbReference type="HOGENOM" id="CLU_035548_1_0_1"/>
<dbReference type="InParanoid" id="E7F4V6"/>
<dbReference type="OMA" id="RSKQAFH"/>
<dbReference type="OrthoDB" id="9947882at2759"/>
<dbReference type="PhylomeDB" id="E7F4V6"/>
<dbReference type="TreeFam" id="TF313392"/>
<dbReference type="PRO" id="PR:E7F4V6"/>
<dbReference type="Proteomes" id="UP000000437">
    <property type="component" value="Chromosome 8"/>
</dbReference>
<dbReference type="Bgee" id="ENSDARG00000088816">
    <property type="expression patterns" value="Expressed in pharyngeal gill and 13 other cell types or tissues"/>
</dbReference>
<dbReference type="GO" id="GO:0031090">
    <property type="term" value="C:organelle membrane"/>
    <property type="evidence" value="ECO:0000250"/>
    <property type="project" value="UniProtKB"/>
</dbReference>
<dbReference type="GO" id="GO:0005886">
    <property type="term" value="C:plasma membrane"/>
    <property type="evidence" value="ECO:0000250"/>
    <property type="project" value="UniProtKB"/>
</dbReference>
<dbReference type="GO" id="GO:0046872">
    <property type="term" value="F:metal ion binding"/>
    <property type="evidence" value="ECO:0007669"/>
    <property type="project" value="UniProtKB-KW"/>
</dbReference>
<dbReference type="GO" id="GO:0004222">
    <property type="term" value="F:metalloendopeptidase activity"/>
    <property type="evidence" value="ECO:0000250"/>
    <property type="project" value="UniProtKB"/>
</dbReference>
<dbReference type="GO" id="GO:0017147">
    <property type="term" value="F:Wnt-protein binding"/>
    <property type="evidence" value="ECO:0000250"/>
    <property type="project" value="UniProtKB"/>
</dbReference>
<dbReference type="GO" id="GO:0030178">
    <property type="term" value="P:negative regulation of Wnt signaling pathway"/>
    <property type="evidence" value="ECO:0000250"/>
    <property type="project" value="UniProtKB"/>
</dbReference>
<dbReference type="GO" id="GO:0006508">
    <property type="term" value="P:proteolysis"/>
    <property type="evidence" value="ECO:0007669"/>
    <property type="project" value="UniProtKB-KW"/>
</dbReference>
<dbReference type="GO" id="GO:0016055">
    <property type="term" value="P:Wnt signaling pathway"/>
    <property type="evidence" value="ECO:0007669"/>
    <property type="project" value="UniProtKB-KW"/>
</dbReference>
<dbReference type="CDD" id="cd14789">
    <property type="entry name" value="Tiki"/>
    <property type="match status" value="1"/>
</dbReference>
<dbReference type="InterPro" id="IPR040230">
    <property type="entry name" value="TIKI1/2-like"/>
</dbReference>
<dbReference type="InterPro" id="IPR002816">
    <property type="entry name" value="TraB/PrgY/GumN_fam"/>
</dbReference>
<dbReference type="PANTHER" id="PTHR31120">
    <property type="entry name" value="METALLOPROTEASE TIKI"/>
    <property type="match status" value="1"/>
</dbReference>
<dbReference type="PANTHER" id="PTHR31120:SF8">
    <property type="entry name" value="METALLOPROTEASE TIKI2"/>
    <property type="match status" value="1"/>
</dbReference>
<dbReference type="Pfam" id="PF01963">
    <property type="entry name" value="TraB_PrgY_gumN"/>
    <property type="match status" value="1"/>
</dbReference>
<feature type="signal peptide" evidence="2">
    <location>
        <begin position="1"/>
        <end position="22"/>
    </location>
</feature>
<feature type="chain" id="PRO_0000419452" description="Metalloprotease TIKI2">
    <location>
        <begin position="23"/>
        <end position="518"/>
    </location>
</feature>
<feature type="topological domain" description="Extracellular" evidence="2">
    <location>
        <begin position="23"/>
        <end position="499"/>
    </location>
</feature>
<feature type="transmembrane region" description="Helical" evidence="2">
    <location>
        <begin position="500"/>
        <end position="517"/>
    </location>
</feature>
<feature type="topological domain" description="Cytoplasmic" evidence="2">
    <location>
        <position position="518"/>
    </location>
</feature>
<feature type="glycosylation site" description="N-linked (GlcNAc...) asparagine" evidence="2">
    <location>
        <position position="224"/>
    </location>
</feature>
<feature type="glycosylation site" description="N-linked (GlcNAc...) asparagine" evidence="2">
    <location>
        <position position="233"/>
    </location>
</feature>
<feature type="glycosylation site" description="N-linked (GlcNAc...) asparagine" evidence="2">
    <location>
        <position position="282"/>
    </location>
</feature>
<feature type="glycosylation site" description="N-linked (GlcNAc...) asparagine" evidence="2">
    <location>
        <position position="325"/>
    </location>
</feature>
<feature type="glycosylation site" description="N-linked (GlcNAc...) asparagine" evidence="2">
    <location>
        <position position="340"/>
    </location>
</feature>
<accession>E7F4V6</accession>
<protein>
    <recommendedName>
        <fullName>Metalloprotease TIKI2</fullName>
        <ecNumber>3.4.-.-</ecNumber>
    </recommendedName>
    <alternativeName>
        <fullName>TRAB domain-containing protein 2B</fullName>
    </alternativeName>
</protein>
<comment type="function">
    <text evidence="1">Metalloprotease that acts as a negative regulator of the Wnt signaling pathway by mediating the cleavage of the N-terminal residues of a subset of Wnt proteins. Following cleavage, Wnt proteins become oxidized and form large disulfide-bond oligomers, leading to their inactivation (By similarity).</text>
</comment>
<comment type="cofactor">
    <cofactor evidence="1">
        <name>Mn(2+)</name>
        <dbReference type="ChEBI" id="CHEBI:29035"/>
    </cofactor>
    <cofactor evidence="1">
        <name>Co(2+)</name>
        <dbReference type="ChEBI" id="CHEBI:48828"/>
    </cofactor>
    <text evidence="1">Divalent metal cations. Mn(2+) or Co(2+).</text>
</comment>
<comment type="subcellular location">
    <subcellularLocation>
        <location evidence="1">Cell membrane</location>
        <topology evidence="1">Single-pass type I membrane protein</topology>
    </subcellularLocation>
</comment>
<comment type="similarity">
    <text evidence="3">Belongs to the TIKI family.</text>
</comment>